<proteinExistence type="evidence at protein level"/>
<sequence>MGRFKNNKKSRVIGKPIAKKNQEDVSHVTGDKIPKSFVFSRMKLAGPVKQLQMDLRKLMLPYTALSLKEKKRNTLRDFLNVSGPMGVTHFLMLSKTASSLSLRVARTPQGPTLTFKIHQYSLASDIAQSQLRPRCPQDLFKSPPLIVLSGFGSQELHLKLATIMFQNIFPAIDINTVKLSTCQRLVLLNYNKDTKLIDFRHYSIRLQPVGVSRRIRKFVQNHQVPDLRNLQDVSDFVTKAGYGSESEGDEEAATVTLSSDLGRVNKGATKSAVKLQEIGPRMTMQLVKVEEGLCTGGIIFSEYDVDGKKEKLKKKQDEEEEEDSEEEGEEGSEEDGEDMDEDFED</sequence>
<accession>Q9ASU7</accession>
<accession>Q9FLT1</accession>
<organism>
    <name type="scientific">Arabidopsis thaliana</name>
    <name type="common">Mouse-ear cress</name>
    <dbReference type="NCBI Taxonomy" id="3702"/>
    <lineage>
        <taxon>Eukaryota</taxon>
        <taxon>Viridiplantae</taxon>
        <taxon>Streptophyta</taxon>
        <taxon>Embryophyta</taxon>
        <taxon>Tracheophyta</taxon>
        <taxon>Spermatophyta</taxon>
        <taxon>Magnoliopsida</taxon>
        <taxon>eudicotyledons</taxon>
        <taxon>Gunneridae</taxon>
        <taxon>Pentapetalae</taxon>
        <taxon>rosids</taxon>
        <taxon>malvids</taxon>
        <taxon>Brassicales</taxon>
        <taxon>Brassicaceae</taxon>
        <taxon>Camelineae</taxon>
        <taxon>Arabidopsis</taxon>
    </lineage>
</organism>
<reference key="1">
    <citation type="journal article" date="1998" name="DNA Res.">
        <title>Structural analysis of Arabidopsis thaliana chromosome 5. IV. Sequence features of the regions of 1,456,315 bp covered by nineteen physically assigned P1 and TAC clones.</title>
        <authorList>
            <person name="Sato S."/>
            <person name="Kaneko T."/>
            <person name="Kotani H."/>
            <person name="Nakamura Y."/>
            <person name="Asamizu E."/>
            <person name="Miyajima N."/>
            <person name="Tabata S."/>
        </authorList>
    </citation>
    <scope>NUCLEOTIDE SEQUENCE [LARGE SCALE GENOMIC DNA]</scope>
    <source>
        <strain>cv. Columbia</strain>
    </source>
</reference>
<reference key="2">
    <citation type="journal article" date="2017" name="Plant J.">
        <title>Araport11: a complete reannotation of the Arabidopsis thaliana reference genome.</title>
        <authorList>
            <person name="Cheng C.Y."/>
            <person name="Krishnakumar V."/>
            <person name="Chan A.P."/>
            <person name="Thibaud-Nissen F."/>
            <person name="Schobel S."/>
            <person name="Town C.D."/>
        </authorList>
    </citation>
    <scope>GENOME REANNOTATION</scope>
    <source>
        <strain>cv. Columbia</strain>
    </source>
</reference>
<reference key="3">
    <citation type="journal article" date="2003" name="Science">
        <title>Empirical analysis of transcriptional activity in the Arabidopsis genome.</title>
        <authorList>
            <person name="Yamada K."/>
            <person name="Lim J."/>
            <person name="Dale J.M."/>
            <person name="Chen H."/>
            <person name="Shinn P."/>
            <person name="Palm C.J."/>
            <person name="Southwick A.M."/>
            <person name="Wu H.C."/>
            <person name="Kim C.J."/>
            <person name="Nguyen M."/>
            <person name="Pham P.K."/>
            <person name="Cheuk R.F."/>
            <person name="Karlin-Newmann G."/>
            <person name="Liu S.X."/>
            <person name="Lam B."/>
            <person name="Sakano H."/>
            <person name="Wu T."/>
            <person name="Yu G."/>
            <person name="Miranda M."/>
            <person name="Quach H.L."/>
            <person name="Tripp M."/>
            <person name="Chang C.H."/>
            <person name="Lee J.M."/>
            <person name="Toriumi M.J."/>
            <person name="Chan M.M."/>
            <person name="Tang C.C."/>
            <person name="Onodera C.S."/>
            <person name="Deng J.M."/>
            <person name="Akiyama K."/>
            <person name="Ansari Y."/>
            <person name="Arakawa T."/>
            <person name="Banh J."/>
            <person name="Banno F."/>
            <person name="Bowser L."/>
            <person name="Brooks S.Y."/>
            <person name="Carninci P."/>
            <person name="Chao Q."/>
            <person name="Choy N."/>
            <person name="Enju A."/>
            <person name="Goldsmith A.D."/>
            <person name="Gurjal M."/>
            <person name="Hansen N.F."/>
            <person name="Hayashizaki Y."/>
            <person name="Johnson-Hopson C."/>
            <person name="Hsuan V.W."/>
            <person name="Iida K."/>
            <person name="Karnes M."/>
            <person name="Khan S."/>
            <person name="Koesema E."/>
            <person name="Ishida J."/>
            <person name="Jiang P.X."/>
            <person name="Jones T."/>
            <person name="Kawai J."/>
            <person name="Kamiya A."/>
            <person name="Meyers C."/>
            <person name="Nakajima M."/>
            <person name="Narusaka M."/>
            <person name="Seki M."/>
            <person name="Sakurai T."/>
            <person name="Satou M."/>
            <person name="Tamse R."/>
            <person name="Vaysberg M."/>
            <person name="Wallender E.K."/>
            <person name="Wong C."/>
            <person name="Yamamura Y."/>
            <person name="Yuan S."/>
            <person name="Shinozaki K."/>
            <person name="Davis R.W."/>
            <person name="Theologis A."/>
            <person name="Ecker J.R."/>
        </authorList>
    </citation>
    <scope>NUCLEOTIDE SEQUENCE [LARGE SCALE MRNA]</scope>
    <source>
        <strain>cv. Columbia</strain>
    </source>
</reference>
<reference key="4">
    <citation type="journal article" date="1999" name="Mol. Biol. Cell">
        <title>Cloning and characterization of peter pan, a novel Drosophila gene required for larval growth.</title>
        <authorList>
            <person name="Migeon J.C."/>
            <person name="Garfinkel M.S."/>
            <person name="Edgar B.A."/>
        </authorList>
    </citation>
    <scope>CHARACTERIZATION</scope>
</reference>
<evidence type="ECO:0000255" key="1"/>
<evidence type="ECO:0000255" key="2">
    <source>
        <dbReference type="PROSITE-ProRule" id="PRU00034"/>
    </source>
</evidence>
<evidence type="ECO:0000256" key="3">
    <source>
        <dbReference type="SAM" id="MobiDB-lite"/>
    </source>
</evidence>
<evidence type="ECO:0000305" key="4"/>
<comment type="function">
    <text>May play a role in cell growth, differentiation and cell cycle progression.</text>
</comment>
<comment type="alternative products">
    <event type="alternative splicing"/>
    <isoform>
        <id>Q9ASU7-1</id>
        <name>1</name>
        <sequence type="displayed"/>
    </isoform>
    <text>A number of isoforms are produced. According to EST sequences.</text>
</comment>
<comment type="similarity">
    <text evidence="4">Belongs to the PPAN family.</text>
</comment>
<comment type="sequence caution" evidence="4">
    <conflict type="erroneous gene model prediction">
        <sequence resource="EMBL-CDS" id="BAB10077"/>
    </conflict>
</comment>
<name>PPAN_ARATH</name>
<feature type="chain" id="PRO_0000120247" description="Peter Pan-like protein">
    <location>
        <begin position="1"/>
        <end position="345"/>
    </location>
</feature>
<feature type="domain" description="Brix" evidence="2">
    <location>
        <begin position="34"/>
        <end position="295"/>
    </location>
</feature>
<feature type="region of interest" description="Disordered" evidence="3">
    <location>
        <begin position="308"/>
        <end position="345"/>
    </location>
</feature>
<feature type="coiled-coil region" evidence="1">
    <location>
        <begin position="307"/>
        <end position="329"/>
    </location>
</feature>
<feature type="compositionally biased region" description="Acidic residues" evidence="3">
    <location>
        <begin position="318"/>
        <end position="345"/>
    </location>
</feature>
<protein>
    <recommendedName>
        <fullName>Peter Pan-like protein</fullName>
    </recommendedName>
</protein>
<dbReference type="EMBL" id="AB010069">
    <property type="protein sequence ID" value="BAB10077.1"/>
    <property type="status" value="ALT_SEQ"/>
    <property type="molecule type" value="Genomic_DNA"/>
</dbReference>
<dbReference type="EMBL" id="CP002688">
    <property type="protein sequence ID" value="AED97514.1"/>
    <property type="molecule type" value="Genomic_DNA"/>
</dbReference>
<dbReference type="EMBL" id="AF361824">
    <property type="protein sequence ID" value="AAK32836.1"/>
    <property type="molecule type" value="mRNA"/>
</dbReference>
<dbReference type="EMBL" id="AY056064">
    <property type="protein sequence ID" value="AAL06964.1"/>
    <property type="molecule type" value="mRNA"/>
</dbReference>
<dbReference type="EMBL" id="AY069910">
    <property type="protein sequence ID" value="AAL47460.1"/>
    <property type="molecule type" value="mRNA"/>
</dbReference>
<dbReference type="RefSeq" id="NP_568939.2">
    <property type="nucleotide sequence ID" value="NM_125571.5"/>
</dbReference>
<dbReference type="RefSeq" id="NP_851242.1">
    <molecule id="Q9ASU7-1"/>
    <property type="nucleotide sequence ID" value="NM_180911.2"/>
</dbReference>
<dbReference type="RefSeq" id="NP_974976.1">
    <property type="nucleotide sequence ID" value="NM_203247.1"/>
</dbReference>
<dbReference type="SMR" id="Q9ASU7"/>
<dbReference type="BioGRID" id="21543">
    <property type="interactions" value="1"/>
</dbReference>
<dbReference type="FunCoup" id="Q9ASU7">
    <property type="interactions" value="3842"/>
</dbReference>
<dbReference type="STRING" id="3702.Q9ASU7"/>
<dbReference type="iPTMnet" id="Q9ASU7"/>
<dbReference type="PaxDb" id="3702-AT5G61770.2"/>
<dbReference type="ProteomicsDB" id="249036">
    <molecule id="Q9ASU7-1"/>
</dbReference>
<dbReference type="EnsemblPlants" id="AT5G61770.1">
    <molecule id="Q9ASU7-1"/>
    <property type="protein sequence ID" value="AT5G61770.1"/>
    <property type="gene ID" value="AT5G61770"/>
</dbReference>
<dbReference type="GeneID" id="836299"/>
<dbReference type="Gramene" id="AT5G61770.1">
    <molecule id="Q9ASU7-1"/>
    <property type="protein sequence ID" value="AT5G61770.1"/>
    <property type="gene ID" value="AT5G61770"/>
</dbReference>
<dbReference type="KEGG" id="ath:AT5G61770"/>
<dbReference type="Araport" id="AT5G61770"/>
<dbReference type="TAIR" id="AT5G61770">
    <property type="gene designation" value="PPAN"/>
</dbReference>
<dbReference type="eggNOG" id="KOG2963">
    <property type="taxonomic scope" value="Eukaryota"/>
</dbReference>
<dbReference type="HOGENOM" id="CLU_026936_1_0_1"/>
<dbReference type="InParanoid" id="Q9ASU7"/>
<dbReference type="PhylomeDB" id="Q9ASU7"/>
<dbReference type="CD-CODE" id="4299E36E">
    <property type="entry name" value="Nucleolus"/>
</dbReference>
<dbReference type="PRO" id="PR:Q9ASU7"/>
<dbReference type="Proteomes" id="UP000006548">
    <property type="component" value="Chromosome 5"/>
</dbReference>
<dbReference type="ExpressionAtlas" id="Q9ASU7">
    <property type="expression patterns" value="baseline and differential"/>
</dbReference>
<dbReference type="GO" id="GO:0019843">
    <property type="term" value="F:rRNA binding"/>
    <property type="evidence" value="ECO:0007669"/>
    <property type="project" value="InterPro"/>
</dbReference>
<dbReference type="GO" id="GO:0006364">
    <property type="term" value="P:rRNA processing"/>
    <property type="evidence" value="ECO:0007669"/>
    <property type="project" value="InterPro"/>
</dbReference>
<dbReference type="InterPro" id="IPR007109">
    <property type="entry name" value="Brix"/>
</dbReference>
<dbReference type="InterPro" id="IPR045112">
    <property type="entry name" value="PPAN-like"/>
</dbReference>
<dbReference type="PANTHER" id="PTHR12661">
    <property type="entry name" value="PETER PAN-RELATED"/>
    <property type="match status" value="1"/>
</dbReference>
<dbReference type="PANTHER" id="PTHR12661:SF5">
    <property type="entry name" value="SUPPRESSOR OF SWI4 1 HOMOLOG"/>
    <property type="match status" value="1"/>
</dbReference>
<dbReference type="Pfam" id="PF04427">
    <property type="entry name" value="Brix"/>
    <property type="match status" value="1"/>
</dbReference>
<dbReference type="SMART" id="SM00879">
    <property type="entry name" value="Brix"/>
    <property type="match status" value="1"/>
</dbReference>
<dbReference type="PROSITE" id="PS50833">
    <property type="entry name" value="BRIX"/>
    <property type="match status" value="1"/>
</dbReference>
<gene>
    <name type="primary">PPAN</name>
    <name type="ordered locus">At5g61770</name>
    <name type="ORF">MAC9.8</name>
    <name type="ORF">MAC9_70</name>
</gene>
<keyword id="KW-0025">Alternative splicing</keyword>
<keyword id="KW-0175">Coiled coil</keyword>
<keyword id="KW-1185">Reference proteome</keyword>